<comment type="function">
    <text evidence="1 8 9">Plays a central role in virus morphogenesis and assembly. Acts as a viroporin and self-assembles in host membranes forming pentameric protein-lipid pores that allow ion transport. Also plays a role in the induction of apoptosis (By similarity). Activates the host NLRP3 inflammasome, leading to IL-1beta overproduction.</text>
</comment>
<comment type="subunit">
    <text evidence="1 2 3 4 5 7">Homopentamer (PubMed:22819936). Interacts with membrane protein M in the budding compartment of the host cell, which is located between endoplasmic reticulum and the Golgi complex (PubMed:19322648). Interacts with Nucleoprotein (PubMed:24766657). Interacts with the accessory proteins 3a and 7a. Interacts (via C-terminus) with human PALS1 (via PDZ domain); this inhibits the interaction between human PALS1 and human CRB3, and causes delayed tight junction formation and defective cell polarity (PubMed:20861307).</text>
</comment>
<comment type="interaction">
    <interactant intactId="EBI-25487741">
        <id>P59637</id>
    </interactant>
    <interactant intactId="EBI-25492846">
        <id>Q7TFA1</id>
        <label>7b</label>
    </interactant>
    <organismsDiffer>false</organismsDiffer>
    <experiments>2</experiments>
</comment>
<comment type="interaction">
    <interactant intactId="EBI-25487741">
        <id>P59637</id>
    </interactant>
    <interactant intactId="EBI-25487741">
        <id>P59637</id>
        <label>E</label>
    </interactant>
    <organismsDiffer>false</organismsDiffer>
    <experiments>3</experiments>
</comment>
<comment type="interaction">
    <interactant intactId="EBI-25487741">
        <id>P59637</id>
    </interactant>
    <interactant intactId="EBI-25487824">
        <id>P59596</id>
        <label>M</label>
    </interactant>
    <organismsDiffer>false</organismsDiffer>
    <experiments>6</experiments>
</comment>
<comment type="interaction">
    <interactant intactId="EBI-25487741">
        <id>P59637</id>
    </interactant>
    <interactant intactId="EBI-7602718">
        <id>P59595</id>
        <label>N</label>
    </interactant>
    <organismsDiffer>false</organismsDiffer>
    <experiments>4</experiments>
</comment>
<comment type="interaction">
    <interactant intactId="EBI-25487741">
        <id>P59637</id>
    </interactant>
    <interactant intactId="EBI-25475797">
        <id>PRO_0000037309</id>
        <label>rep</label>
        <dbReference type="UniProtKB" id="P0C6X7"/>
    </interactant>
    <organismsDiffer>false</organismsDiffer>
    <experiments>2</experiments>
</comment>
<comment type="interaction">
    <interactant intactId="EBI-25487741">
        <id>P59637</id>
    </interactant>
    <interactant intactId="EBI-25474079">
        <id>PRO_0000037311</id>
        <label>rep</label>
        <dbReference type="UniProtKB" id="P0C6X7"/>
    </interactant>
    <organismsDiffer>false</organismsDiffer>
    <experiments>5</experiments>
</comment>
<comment type="interaction">
    <interactant intactId="EBI-25487741">
        <id>P59637</id>
    </interactant>
    <interactant intactId="EBI-25487941">
        <id>PRO_0000037315</id>
        <label>rep</label>
        <dbReference type="UniProtKB" id="P0C6X7"/>
    </interactant>
    <organismsDiffer>false</organismsDiffer>
    <experiments>2</experiments>
</comment>
<comment type="interaction">
    <interactant intactId="EBI-25487741">
        <id>P59637</id>
    </interactant>
    <interactant intactId="EBI-25487771">
        <id>O35843</id>
        <label>Bcl2l1</label>
    </interactant>
    <organismsDiffer>true</organismsDiffer>
    <experiments>2</experiments>
</comment>
<comment type="interaction">
    <interactant intactId="EBI-25487741">
        <id>P59637</id>
    </interactant>
    <interactant intactId="EBI-526361">
        <id>Q64373</id>
        <label>Bcl2l1</label>
    </interactant>
    <organismsDiffer>true</organismsDiffer>
    <experiments>2</experiments>
</comment>
<comment type="interaction">
    <interactant intactId="EBI-25487741">
        <id>P59637</id>
    </interactant>
    <interactant intactId="EBI-2513978">
        <id>Q8N3R9</id>
        <label>PALS1</label>
    </interactant>
    <organismsDiffer>true</organismsDiffer>
    <experiments>4</experiments>
</comment>
<comment type="interaction">
    <interactant intactId="EBI-25487741">
        <id>P59637</id>
    </interactant>
    <interactant intactId="EBI-8231026">
        <id>Q8N3R9-1</id>
        <label>PALS1</label>
    </interactant>
    <organismsDiffer>true</organismsDiffer>
    <experiments>9</experiments>
</comment>
<comment type="interaction">
    <interactant intactId="EBI-25487741">
        <id>P59637</id>
    </interactant>
    <interactant intactId="EBI-9640690">
        <id>O00560-1</id>
        <label>SDCBP</label>
    </interactant>
    <organismsDiffer>true</organismsDiffer>
    <experiments>4</experiments>
</comment>
<comment type="subcellular location">
    <subcellularLocation>
        <location evidence="5">Host endoplasmic reticulum-Golgi intermediate compartment</location>
    </subcellularLocation>
    <subcellularLocation>
        <location evidence="1 6 8">Host Golgi apparatus membrane</location>
        <topology evidence="1">Single-pass type III membrane protein</topology>
    </subcellularLocation>
    <text evidence="1 5 6">Colocalizes with S in the host endoplasmic reticulum-Golgi intermediate compartment (PubMed:20861307). The cytoplasmic tail functions as a Golgi complex-targeting signal.</text>
</comment>
<comment type="similarity">
    <text evidence="1">Belongs to the betacoronaviruses E protein family.</text>
</comment>
<feature type="chain" id="PRO_0000106074" description="Envelope small membrane protein">
    <location>
        <begin position="1"/>
        <end position="76"/>
    </location>
</feature>
<feature type="topological domain" description="Virion surface" evidence="1">
    <location>
        <begin position="1"/>
        <end position="16"/>
    </location>
</feature>
<feature type="transmembrane region" description="Helical" evidence="1">
    <location>
        <begin position="17"/>
        <end position="37"/>
    </location>
</feature>
<feature type="topological domain" description="Intravirion" evidence="1">
    <location>
        <begin position="38"/>
        <end position="76"/>
    </location>
</feature>
<feature type="short sequence motif" description="PDZ-binding; required for interaction with human PALS1" evidence="5">
    <location>
        <begin position="73"/>
        <end position="76"/>
    </location>
</feature>
<feature type="sequence variant" description="In strain: Isolate GD01.">
    <original>V</original>
    <variation>M</variation>
    <location>
        <position position="24"/>
    </location>
</feature>
<feature type="mutagenesis site" description="Abolishes interaction with PDZ domain of human PALS1; loss of accumulation in host perinuclear compartment." evidence="5">
    <location>
        <begin position="73"/>
        <end position="76"/>
    </location>
</feature>
<feature type="helix" evidence="10">
    <location>
        <begin position="14"/>
        <end position="42"/>
    </location>
</feature>
<feature type="turn" evidence="10">
    <location>
        <begin position="43"/>
        <end position="45"/>
    </location>
</feature>
<feature type="helix" evidence="10">
    <location>
        <begin position="56"/>
        <end position="64"/>
    </location>
</feature>
<keyword id="KW-0002">3D-structure</keyword>
<keyword id="KW-0053">Apoptosis</keyword>
<keyword id="KW-1040">Host Golgi apparatus</keyword>
<keyword id="KW-1043">Host membrane</keyword>
<keyword id="KW-0472">Membrane</keyword>
<keyword id="KW-1185">Reference proteome</keyword>
<keyword id="KW-0812">Transmembrane</keyword>
<keyword id="KW-1133">Transmembrane helix</keyword>
<name>VEMP_SARS</name>
<gene>
    <name evidence="1" type="primary">E</name>
    <name type="synonym">sM</name>
    <name type="ORF">4</name>
</gene>
<organismHost>
    <name type="scientific">Homo sapiens</name>
    <name type="common">Human</name>
    <dbReference type="NCBI Taxonomy" id="9606"/>
</organismHost>
<organismHost>
    <name type="scientific">Paguma larvata</name>
    <name type="common">Masked palm civet</name>
    <dbReference type="NCBI Taxonomy" id="9675"/>
</organismHost>
<sequence length="76" mass="8361">MYSFVSEETGTLIVNSVLLFLAFVVFLLVTLAILTALRLCAYCCNIVNVSLVKPTVYVYSRVKNLNSSEGVPDLLV</sequence>
<accession>P59637</accession>
<accession>Q7TA13</accession>
<accession>Q7TFA8</accession>
<protein>
    <recommendedName>
        <fullName evidence="1">Envelope small membrane protein</fullName>
        <shortName evidence="1">E protein</shortName>
        <shortName evidence="1">sM protein</shortName>
    </recommendedName>
</protein>
<evidence type="ECO:0000255" key="1">
    <source>
        <dbReference type="HAMAP-Rule" id="MF_04204"/>
    </source>
</evidence>
<evidence type="ECO:0000269" key="2">
    <source>
    </source>
</evidence>
<evidence type="ECO:0000269" key="3">
    <source>
    </source>
</evidence>
<evidence type="ECO:0000269" key="4">
    <source>
    </source>
</evidence>
<evidence type="ECO:0000269" key="5">
    <source>
    </source>
</evidence>
<evidence type="ECO:0000269" key="6">
    <source>
    </source>
</evidence>
<evidence type="ECO:0000269" key="7">
    <source>
    </source>
</evidence>
<evidence type="ECO:0000269" key="8">
    <source>
    </source>
</evidence>
<evidence type="ECO:0000269" key="9">
    <source>
    </source>
</evidence>
<evidence type="ECO:0007829" key="10">
    <source>
        <dbReference type="PDB" id="2MM4"/>
    </source>
</evidence>
<dbReference type="EMBL" id="AY278741">
    <property type="protein sequence ID" value="AAP13443.1"/>
    <property type="molecule type" value="Genomic_RNA"/>
</dbReference>
<dbReference type="EMBL" id="AY274119">
    <property type="protein sequence ID" value="AAP41040.1"/>
    <property type="molecule type" value="Genomic_RNA"/>
</dbReference>
<dbReference type="EMBL" id="AY304492">
    <property type="status" value="NOT_ANNOTATED_CDS"/>
    <property type="molecule type" value="Genomic_RNA"/>
</dbReference>
<dbReference type="EMBL" id="AY282752">
    <property type="status" value="NOT_ANNOTATED_CDS"/>
    <property type="molecule type" value="Genomic_RNA"/>
</dbReference>
<dbReference type="EMBL" id="AY278554">
    <property type="protein sequence ID" value="AAP13570.1"/>
    <property type="molecule type" value="Genomic_RNA"/>
</dbReference>
<dbReference type="EMBL" id="AY278491">
    <property type="status" value="NOT_ANNOTATED_CDS"/>
    <property type="molecule type" value="Genomic_RNA"/>
</dbReference>
<dbReference type="EMBL" id="AY283794">
    <property type="status" value="NOT_ANNOTATED_CDS"/>
    <property type="molecule type" value="Genomic_RNA"/>
</dbReference>
<dbReference type="EMBL" id="AY283795">
    <property type="status" value="NOT_ANNOTATED_CDS"/>
    <property type="molecule type" value="Genomic_RNA"/>
</dbReference>
<dbReference type="EMBL" id="AY283796">
    <property type="status" value="NOT_ANNOTATED_CDS"/>
    <property type="molecule type" value="Genomic_RNA"/>
</dbReference>
<dbReference type="EMBL" id="AY283797">
    <property type="status" value="NOT_ANNOTATED_CDS"/>
    <property type="molecule type" value="Genomic_RNA"/>
</dbReference>
<dbReference type="EMBL" id="AY283798">
    <property type="status" value="NOT_ANNOTATED_CDS"/>
    <property type="molecule type" value="Genomic_RNA"/>
</dbReference>
<dbReference type="EMBL" id="AY278487">
    <property type="status" value="NOT_ANNOTATED_CDS"/>
    <property type="molecule type" value="Genomic_RNA"/>
</dbReference>
<dbReference type="EMBL" id="AY278488">
    <property type="protein sequence ID" value="AAP30033.1"/>
    <property type="molecule type" value="Genomic_RNA"/>
</dbReference>
<dbReference type="EMBL" id="AY278489">
    <property type="protein sequence ID" value="AAP51230.1"/>
    <property type="molecule type" value="Genomic_RNA"/>
</dbReference>
<dbReference type="EMBL" id="AY278490">
    <property type="status" value="NOT_ANNOTATED_CDS"/>
    <property type="molecule type" value="Genomic_RNA"/>
</dbReference>
<dbReference type="EMBL" id="AY279354">
    <property type="status" value="NOT_ANNOTATED_CDS"/>
    <property type="molecule type" value="Genomic_RNA"/>
</dbReference>
<dbReference type="EMBL" id="AY291451">
    <property type="protein sequence ID" value="AAP37020.1"/>
    <property type="molecule type" value="Genomic_RNA"/>
</dbReference>
<dbReference type="EMBL" id="AY310120">
    <property type="protein sequence ID" value="AAP50488.1"/>
    <property type="molecule type" value="Genomic_RNA"/>
</dbReference>
<dbReference type="EMBL" id="AY291315">
    <property type="protein sequence ID" value="AAP33700.1"/>
    <property type="molecule type" value="Genomic_RNA"/>
</dbReference>
<dbReference type="EMBL" id="AY297028">
    <property type="status" value="NOT_ANNOTATED_CDS"/>
    <property type="molecule type" value="Genomic_RNA"/>
</dbReference>
<dbReference type="EMBL" id="AY323975">
    <property type="protein sequence ID" value="AAP73416.1"/>
    <property type="molecule type" value="mRNA"/>
</dbReference>
<dbReference type="EMBL" id="AY321118">
    <property type="status" value="NOT_ANNOTATED_CDS"/>
    <property type="molecule type" value="Genomic_RNA"/>
</dbReference>
<dbReference type="EMBL" id="AY463059">
    <property type="protein sequence ID" value="AAP82979.2"/>
    <property type="molecule type" value="Genomic_RNA"/>
</dbReference>
<dbReference type="EMBL" id="AY338174">
    <property type="protein sequence ID" value="AAQ01600.1"/>
    <property type="molecule type" value="Genomic_RNA"/>
</dbReference>
<dbReference type="EMBL" id="AY338175">
    <property type="protein sequence ID" value="AAQ01612.1"/>
    <property type="molecule type" value="Genomic_RNA"/>
</dbReference>
<dbReference type="EMBL" id="AY348314">
    <property type="protein sequence ID" value="AAP97885.1"/>
    <property type="molecule type" value="Genomic_RNA"/>
</dbReference>
<dbReference type="EMBL" id="AP006557">
    <property type="protein sequence ID" value="BAC81351.1"/>
    <property type="molecule type" value="Genomic_RNA"/>
</dbReference>
<dbReference type="EMBL" id="AP006558">
    <property type="protein sequence ID" value="BAC81365.1"/>
    <property type="molecule type" value="Genomic_RNA"/>
</dbReference>
<dbReference type="EMBL" id="AP006559">
    <property type="protein sequence ID" value="BAC81379.1"/>
    <property type="molecule type" value="Genomic_RNA"/>
</dbReference>
<dbReference type="EMBL" id="AP006560">
    <property type="protein sequence ID" value="BAC81393.1"/>
    <property type="molecule type" value="Genomic_RNA"/>
</dbReference>
<dbReference type="EMBL" id="AP006561">
    <property type="protein sequence ID" value="BAC81407.1"/>
    <property type="molecule type" value="Genomic_RNA"/>
</dbReference>
<dbReference type="EMBL" id="AY323977">
    <property type="protein sequence ID" value="AAP72977.1"/>
    <property type="molecule type" value="Genomic_RNA"/>
</dbReference>
<dbReference type="EMBL" id="AY362698">
    <property type="status" value="NOT_ANNOTATED_CDS"/>
    <property type="molecule type" value="Genomic_RNA"/>
</dbReference>
<dbReference type="EMBL" id="AY362699">
    <property type="status" value="NOT_ANNOTATED_CDS"/>
    <property type="molecule type" value="Genomic_RNA"/>
</dbReference>
<dbReference type="EMBL" id="AY427439">
    <property type="protein sequence ID" value="AAQ94063.1"/>
    <property type="molecule type" value="Genomic_RNA"/>
</dbReference>
<dbReference type="PDB" id="2MM4">
    <property type="method" value="NMR"/>
    <property type="chains" value="A=8-65"/>
</dbReference>
<dbReference type="PDB" id="5X29">
    <property type="method" value="NMR"/>
    <property type="chains" value="A/B/C/D/E=8-65"/>
</dbReference>
<dbReference type="PDB" id="5XER">
    <property type="method" value="NMR"/>
    <property type="chains" value="A=55-63"/>
</dbReference>
<dbReference type="PDB" id="5XES">
    <property type="method" value="NMR"/>
    <property type="chains" value="A=55-63"/>
</dbReference>
<dbReference type="PDB" id="7NTJ">
    <property type="method" value="X-ray"/>
    <property type="resolution" value="1.74 A"/>
    <property type="chains" value="C/G=69-76"/>
</dbReference>
<dbReference type="PDBsum" id="2MM4"/>
<dbReference type="PDBsum" id="5X29"/>
<dbReference type="PDBsum" id="5XER"/>
<dbReference type="PDBsum" id="5XES"/>
<dbReference type="PDBsum" id="7NTJ"/>
<dbReference type="SMR" id="P59637"/>
<dbReference type="BioGRID" id="4383914">
    <property type="interactions" value="44"/>
</dbReference>
<dbReference type="IntAct" id="P59637">
    <property type="interactions" value="34"/>
</dbReference>
<dbReference type="OrthoDB" id="38268at10239"/>
<dbReference type="Reactome" id="R-HSA-9678110">
    <property type="pathway name" value="Attachment and Entry"/>
</dbReference>
<dbReference type="Reactome" id="R-HSA-9679509">
    <property type="pathway name" value="Virion Assembly and Release"/>
</dbReference>
<dbReference type="Reactome" id="R-HSA-9683683">
    <property type="pathway name" value="Maturation of protein E"/>
</dbReference>
<dbReference type="Reactome" id="R-HSA-9683701">
    <property type="pathway name" value="Translation of Structural Proteins"/>
</dbReference>
<dbReference type="Reactome" id="R-HSA-9692912">
    <property type="pathway name" value="SARS-CoV-1 targets PDZ proteins in cell-cell junction"/>
</dbReference>
<dbReference type="Reactome" id="R-HSA-9692913">
    <property type="pathway name" value="SARS-CoV-1-mediated effects on programmed cell death"/>
</dbReference>
<dbReference type="Reactome" id="R-HSA-9692916">
    <property type="pathway name" value="SARS-CoV-1 activates/modulates innate immune responses"/>
</dbReference>
<dbReference type="SIGNOR" id="P59637"/>
<dbReference type="EvolutionaryTrace" id="P59637"/>
<dbReference type="Proteomes" id="UP000000354">
    <property type="component" value="Segment"/>
</dbReference>
<dbReference type="Proteomes" id="UP000103670">
    <property type="component" value="Segment"/>
</dbReference>
<dbReference type="Proteomes" id="UP000109640">
    <property type="component" value="Segment"/>
</dbReference>
<dbReference type="Proteomes" id="UP000116947">
    <property type="component" value="Segment"/>
</dbReference>
<dbReference type="Proteomes" id="UP000121636">
    <property type="component" value="Segment"/>
</dbReference>
<dbReference type="Proteomes" id="UP000131569">
    <property type="component" value="Segment"/>
</dbReference>
<dbReference type="Proteomes" id="UP000131955">
    <property type="component" value="Segment"/>
</dbReference>
<dbReference type="Proteomes" id="UP000137377">
    <property type="component" value="Genome"/>
</dbReference>
<dbReference type="Proteomes" id="UP000138690">
    <property type="component" value="Segment"/>
</dbReference>
<dbReference type="Proteomes" id="UP000143093">
    <property type="component" value="Segment"/>
</dbReference>
<dbReference type="Proteomes" id="UP000145651">
    <property type="component" value="Segment"/>
</dbReference>
<dbReference type="Proteomes" id="UP000146108">
    <property type="component" value="Segment"/>
</dbReference>
<dbReference type="Proteomes" id="UP000146181">
    <property type="component" value="Segment"/>
</dbReference>
<dbReference type="Proteomes" id="UP000146296">
    <property type="component" value="Segment"/>
</dbReference>
<dbReference type="Proteomes" id="UP000148194">
    <property type="component" value="Segment"/>
</dbReference>
<dbReference type="Proteomes" id="UP000153467">
    <property type="component" value="Segment"/>
</dbReference>
<dbReference type="Proteomes" id="UP000160648">
    <property type="component" value="Segment"/>
</dbReference>
<dbReference type="Proteomes" id="UP000164441">
    <property type="component" value="Segment"/>
</dbReference>
<dbReference type="Proteomes" id="UP000172416">
    <property type="component" value="Segment"/>
</dbReference>
<dbReference type="Proteomes" id="UP000180358">
    <property type="component" value="Segment"/>
</dbReference>
<dbReference type="GO" id="GO:0044172">
    <property type="term" value="C:host cell endoplasmic reticulum-Golgi intermediate compartment"/>
    <property type="evidence" value="ECO:0007669"/>
    <property type="project" value="UniProtKB-SubCell"/>
</dbReference>
<dbReference type="GO" id="GO:0044177">
    <property type="term" value="C:host cell Golgi apparatus"/>
    <property type="evidence" value="ECO:0000314"/>
    <property type="project" value="UniProtKB"/>
</dbReference>
<dbReference type="GO" id="GO:0044178">
    <property type="term" value="C:host cell Golgi membrane"/>
    <property type="evidence" value="ECO:0007669"/>
    <property type="project" value="UniProtKB-SubCell"/>
</dbReference>
<dbReference type="GO" id="GO:0016020">
    <property type="term" value="C:membrane"/>
    <property type="evidence" value="ECO:0007669"/>
    <property type="project" value="UniProtKB-UniRule"/>
</dbReference>
<dbReference type="GO" id="GO:0055036">
    <property type="term" value="C:virion membrane"/>
    <property type="evidence" value="ECO:0000304"/>
    <property type="project" value="Reactome"/>
</dbReference>
<dbReference type="GO" id="GO:0042802">
    <property type="term" value="F:identical protein binding"/>
    <property type="evidence" value="ECO:0000353"/>
    <property type="project" value="IntAct"/>
</dbReference>
<dbReference type="GO" id="GO:0051673">
    <property type="term" value="P:disruption of plasma membrane integrity in another organism"/>
    <property type="evidence" value="ECO:0000314"/>
    <property type="project" value="CACAO"/>
</dbReference>
<dbReference type="GO" id="GO:0046760">
    <property type="term" value="P:viral budding from Golgi membrane"/>
    <property type="evidence" value="ECO:0000314"/>
    <property type="project" value="UniProtKB"/>
</dbReference>
<dbReference type="CDD" id="cd21536">
    <property type="entry name" value="SARS-CoV-2_E"/>
    <property type="match status" value="1"/>
</dbReference>
<dbReference type="Gene3D" id="6.10.250.1810">
    <property type="match status" value="1"/>
</dbReference>
<dbReference type="HAMAP" id="MF_04204">
    <property type="entry name" value="BETA_CORONA_E"/>
    <property type="match status" value="1"/>
</dbReference>
<dbReference type="InterPro" id="IPR043506">
    <property type="entry name" value="E_protein_bCoV"/>
</dbReference>
<dbReference type="InterPro" id="IPR003873">
    <property type="entry name" value="E_protein_CoV"/>
</dbReference>
<dbReference type="InterPro" id="IPR044377">
    <property type="entry name" value="E_SARS-CoV-2"/>
</dbReference>
<dbReference type="Pfam" id="PF02723">
    <property type="entry name" value="CoV_E"/>
    <property type="match status" value="1"/>
</dbReference>
<dbReference type="PROSITE" id="PS51926">
    <property type="entry name" value="COV_E"/>
    <property type="match status" value="1"/>
</dbReference>
<organism>
    <name type="scientific">Severe acute respiratory syndrome coronavirus</name>
    <name type="common">SARS-CoV</name>
    <dbReference type="NCBI Taxonomy" id="694009"/>
    <lineage>
        <taxon>Viruses</taxon>
        <taxon>Riboviria</taxon>
        <taxon>Orthornavirae</taxon>
        <taxon>Pisuviricota</taxon>
        <taxon>Pisoniviricetes</taxon>
        <taxon>Nidovirales</taxon>
        <taxon>Cornidovirineae</taxon>
        <taxon>Coronaviridae</taxon>
        <taxon>Orthocoronavirinae</taxon>
        <taxon>Betacoronavirus</taxon>
        <taxon>Sarbecovirus</taxon>
    </lineage>
</organism>
<reference key="1">
    <citation type="journal article" date="2003" name="Science">
        <title>Characterization of a novel coronavirus associated with severe acute respiratory syndrome.</title>
        <authorList>
            <person name="Rota P.A."/>
            <person name="Oberste M.S."/>
            <person name="Monroe S.S."/>
            <person name="Nix W.A."/>
            <person name="Campagnoli R."/>
            <person name="Icenogle J.P."/>
            <person name="Penaranda S."/>
            <person name="Bankamp B."/>
            <person name="Maher K."/>
            <person name="Chen M.-H."/>
            <person name="Tong S."/>
            <person name="Tamin A."/>
            <person name="Lowe L."/>
            <person name="Frace M."/>
            <person name="DeRisi J.L."/>
            <person name="Chen Q."/>
            <person name="Wang D."/>
            <person name="Erdman D.D."/>
            <person name="Peret T.C.T."/>
            <person name="Burns C."/>
            <person name="Ksiazek T.G."/>
            <person name="Rollin P.E."/>
            <person name="Sanchez A."/>
            <person name="Liffick S."/>
            <person name="Holloway B."/>
            <person name="Limor J."/>
            <person name="McCaustland K."/>
            <person name="Olsen-Rasmussen M."/>
            <person name="Fouchier R."/>
            <person name="Guenther S."/>
            <person name="Osterhaus A.D.M.E."/>
            <person name="Drosten C."/>
            <person name="Pallansch M.A."/>
            <person name="Anderson L.J."/>
            <person name="Bellini W.J."/>
        </authorList>
    </citation>
    <scope>NUCLEOTIDE SEQUENCE [GENOMIC RNA]</scope>
    <source>
        <strain>Isolate Urbani</strain>
    </source>
</reference>
<reference key="2">
    <citation type="journal article" date="2003" name="Science">
        <title>The genome sequence of the SARS-associated coronavirus.</title>
        <authorList>
            <person name="Marra M.A."/>
            <person name="Jones S.J.M."/>
            <person name="Astell C.R."/>
            <person name="Holt R.A."/>
            <person name="Brooks-Wilson A."/>
            <person name="Butterfield Y.S.N."/>
            <person name="Khattra J."/>
            <person name="Asano J.K."/>
            <person name="Barber S.A."/>
            <person name="Chan S.Y."/>
            <person name="Cloutier A."/>
            <person name="Coughlin S.M."/>
            <person name="Freeman D."/>
            <person name="Girn N."/>
            <person name="Griffith O.L."/>
            <person name="Leach S.R."/>
            <person name="Mayo M."/>
            <person name="McDonald H."/>
            <person name="Montgomery S.B."/>
            <person name="Pandoh P.K."/>
            <person name="Petrescu A.S."/>
            <person name="Robertson A.G."/>
            <person name="Schein J.E."/>
            <person name="Siddiqui A."/>
            <person name="Smailus D.E."/>
            <person name="Stott J.M."/>
            <person name="Yang G.S."/>
            <person name="Plummer F."/>
            <person name="Andonov A."/>
            <person name="Artsob H."/>
            <person name="Bastien N."/>
            <person name="Bernard K."/>
            <person name="Booth T.F."/>
            <person name="Bowness D."/>
            <person name="Czub M."/>
            <person name="Drebot M."/>
            <person name="Fernando L."/>
            <person name="Flick R."/>
            <person name="Garbutt M."/>
            <person name="Gray M."/>
            <person name="Grolla A."/>
            <person name="Jones S."/>
            <person name="Feldmann H."/>
            <person name="Meyers A."/>
            <person name="Kabani A."/>
            <person name="Li Y."/>
            <person name="Normand S."/>
            <person name="Stroher U."/>
            <person name="Tipples G.A."/>
            <person name="Tyler S."/>
            <person name="Vogrig R."/>
            <person name="Ward D."/>
            <person name="Watson B."/>
            <person name="Brunham R.C."/>
            <person name="Krajden M."/>
            <person name="Petric M."/>
            <person name="Skowronski D.M."/>
            <person name="Upton C."/>
            <person name="Roper R.L."/>
        </authorList>
    </citation>
    <scope>NUCLEOTIDE SEQUENCE [GENOMIC RNA]</scope>
    <source>
        <strain>Isolate Tor2</strain>
    </source>
</reference>
<reference key="3">
    <citation type="journal article" date="2003" name="N. Engl. J. Med.">
        <title>Coronavirus genomic-sequence variations and the epidemiology of the severe acute respiratory syndrome.</title>
        <authorList>
            <person name="Tsui S.K.W."/>
            <person name="Chim S.S.C."/>
            <person name="Lo Y.M.D."/>
        </authorList>
    </citation>
    <scope>NUCLEOTIDE SEQUENCE [GENOMIC RNA]</scope>
    <source>
        <strain>Isolate CUHK-Su10</strain>
        <strain>Isolate CUHK-W1</strain>
    </source>
</reference>
<reference key="4">
    <citation type="journal article" date="2003" name="Science">
        <title>Isolation and characterization of viruses related to the SARS coronavirus from animals in southern China.</title>
        <authorList>
            <person name="Guan Y."/>
            <person name="Zheng B.J."/>
            <person name="He Y.Q."/>
            <person name="Liu X.L."/>
            <person name="Zhuang Z.X."/>
            <person name="Cheung C.L."/>
            <person name="Luo S.W."/>
            <person name="Li P.H."/>
            <person name="Zhang L.J."/>
            <person name="Guan Y.J."/>
            <person name="Butt K.M."/>
            <person name="Wong K.L."/>
            <person name="Chan K.W."/>
            <person name="Lim W."/>
            <person name="Shortridge K.F."/>
            <person name="Yuen K.Y."/>
            <person name="Peiris J.S.M."/>
            <person name="Poon L.L.M."/>
        </authorList>
    </citation>
    <scope>NUCLEOTIDE SEQUENCE [GENOMIC RNA]</scope>
    <source>
        <strain>Isolate GZ50</strain>
        <strain>Isolate HKU-36871</strain>
    </source>
</reference>
<reference key="5">
    <citation type="journal article" date="2003" name="Exp. Biol. Med.">
        <title>The complete genome sequence of severe acute respiratory syndrome coronavirus strain HKU-39849 (HK-39).</title>
        <authorList>
            <person name="Zeng F.Y."/>
            <person name="Chan C.W."/>
            <person name="Chan M.N."/>
            <person name="Chen J.D."/>
            <person name="Chow K.Y.C."/>
            <person name="Hon C.C.C."/>
            <person name="Hui R.K.H."/>
            <person name="Li J."/>
            <person name="Li V.Y.Y."/>
            <person name="Wang C.Y."/>
            <person name="Wang P.Y."/>
            <person name="Guan Y."/>
            <person name="Zheng B."/>
            <person name="Poon L.L.M."/>
            <person name="Chan K.H."/>
            <person name="Yuen K.Y."/>
            <person name="Peiris J.S.M."/>
            <person name="Leung F.C."/>
        </authorList>
    </citation>
    <scope>NUCLEOTIDE SEQUENCE [GENOMIC RNA]</scope>
    <source>
        <strain>Isolate HKU-39849</strain>
    </source>
</reference>
<reference key="6">
    <citation type="journal article" date="2003" name="Lancet">
        <title>Comparative full-length genome sequence analysis of 14 SARS coronavirus isolates and common mutations associated with putative origins of infection.</title>
        <authorList>
            <person name="Ruan Y."/>
            <person name="Wei C.L."/>
            <person name="Ling A.E."/>
            <person name="Vega V.B."/>
            <person name="Thoreau H."/>
            <person name="Se Thoe S.Y."/>
            <person name="Chia J.-M."/>
            <person name="Ng P."/>
            <person name="Chiu K.P."/>
            <person name="Lim L."/>
            <person name="Zhang T."/>
            <person name="Chan K.P."/>
            <person name="Oon L.E.L."/>
            <person name="Ng M.L."/>
            <person name="Leo S.Y."/>
            <person name="Ng L.F.P."/>
            <person name="Ren E.C."/>
            <person name="Stanton L.W."/>
            <person name="Long P.M."/>
            <person name="Liu E.T."/>
        </authorList>
    </citation>
    <scope>NUCLEOTIDE SEQUENCE [GENOMIC RNA]</scope>
    <source>
        <strain>Isolate Sin2500</strain>
        <strain>Isolate Sin2677</strain>
        <strain>Isolate Sin2679</strain>
        <strain>Isolate Sin2748</strain>
        <strain>Isolate sin2774</strain>
    </source>
</reference>
<reference key="7">
    <citation type="journal article" date="2003" name="Lancet">
        <authorList>
            <person name="Ruan Y."/>
            <person name="Wei C.L."/>
            <person name="Ling A.E."/>
            <person name="Vega V.B."/>
            <person name="Thoreau H."/>
            <person name="Se Thoe S.Y."/>
            <person name="Chia J.-M."/>
            <person name="Ng P."/>
            <person name="Chiu K.P."/>
            <person name="Lim L."/>
            <person name="Zhang T."/>
            <person name="Chan K.P."/>
            <person name="Oon L.E.L."/>
            <person name="Ng M.L."/>
            <person name="Leo S.Y."/>
            <person name="Ng L.F.P."/>
            <person name="Ren E.C."/>
            <person name="Stanton L.W."/>
            <person name="Long P.M."/>
            <person name="Liu E.T."/>
        </authorList>
    </citation>
    <scope>ERRATUM OF PUBMED:12781537</scope>
</reference>
<reference key="8">
    <citation type="submission" date="2003-04" db="EMBL/GenBank/DDBJ databases">
        <authorList>
            <person name="Qin E."/>
            <person name="Zhu Q."/>
            <person name="Yu M."/>
            <person name="Fan B."/>
            <person name="Chang G."/>
            <person name="Si B."/>
            <person name="Yang B."/>
            <person name="Peng W."/>
            <person name="Jiang T."/>
            <person name="Liu B."/>
            <person name="Deng Y."/>
            <person name="Liu H."/>
            <person name="Zhang Y."/>
            <person name="Wang C."/>
            <person name="Li Y."/>
            <person name="Gan Y."/>
            <person name="Li X."/>
            <person name="Lu F."/>
            <person name="Tan G."/>
            <person name="Yang R."/>
            <person name="Cao W.S."/>
            <person name="Wang J."/>
            <person name="Chen W."/>
            <person name="Cong L."/>
            <person name="Deng Y."/>
            <person name="Dong W."/>
            <person name="Han Y."/>
            <person name="Hu W."/>
            <person name="Lei M."/>
            <person name="Li C."/>
            <person name="Li G."/>
            <person name="Li G."/>
            <person name="Li H."/>
            <person name="Li S."/>
            <person name="Li S."/>
            <person name="Li W."/>
            <person name="Li W."/>
            <person name="Lin W."/>
            <person name="Liu J."/>
            <person name="Liu Z."/>
            <person name="Lu H."/>
            <person name="Ni P."/>
            <person name="Qi Q."/>
            <person name="Sun Y."/>
            <person name="Tang L."/>
            <person name="Tong Z."/>
            <person name="Wang J."/>
            <person name="Wang X."/>
            <person name="Wu Q."/>
            <person name="Xi Y."/>
            <person name="Xu Z."/>
            <person name="Yang L."/>
            <person name="Ye C."/>
            <person name="Ye J."/>
            <person name="Zhang B."/>
            <person name="Zhang F."/>
            <person name="Zhang J."/>
            <person name="Zhang X."/>
            <person name="Zhou J."/>
            <person name="Yang H."/>
        </authorList>
    </citation>
    <scope>NUCLEOTIDE SEQUENCE [GENOMIC RNA]</scope>
    <source>
        <strain>Isolate BJ01</strain>
        <strain>Isolate BJ02</strain>
        <strain>Isolate BJ03</strain>
        <strain>Isolate BJ04</strain>
        <strain>Isolate GD01</strain>
    </source>
</reference>
<reference key="9">
    <citation type="submission" date="2003-05" db="EMBL/GenBank/DDBJ databases">
        <title>The complete genome of SARS coronavirus clone TW1.</title>
        <authorList>
            <person name="Yeh S.-H."/>
            <person name="Kao C.-L."/>
            <person name="Tsai C.-Y."/>
            <person name="Liu C.-J."/>
            <person name="Chen D.-S."/>
            <person name="Chen P.-J."/>
        </authorList>
    </citation>
    <scope>NUCLEOTIDE SEQUENCE [GENOMIC RNA]</scope>
    <source>
        <strain>Isolate TW1</strain>
    </source>
</reference>
<reference key="10">
    <citation type="submission" date="2003-05" db="EMBL/GenBank/DDBJ databases">
        <title>SARS virus is a close relative of type II coronaviruses.</title>
        <authorList>
            <person name="Eickmann M."/>
            <person name="Becker S."/>
            <person name="Klenk H.-D."/>
            <person name="Doerr H.W."/>
            <person name="Stadler K."/>
            <person name="Censini S."/>
            <person name="Guidotti S."/>
            <person name="Masignani V."/>
            <person name="Scarselli M."/>
            <person name="Mora M."/>
            <person name="Donati C."/>
            <person name="Han J."/>
            <person name="Song H.C."/>
            <person name="Abrignani S."/>
            <person name="Covacci A."/>
            <person name="Rappuoli R."/>
        </authorList>
    </citation>
    <scope>NUCLEOTIDE SEQUENCE [GENOMIC RNA]</scope>
    <source>
        <strain>Isolate FRA</strain>
    </source>
</reference>
<reference key="11">
    <citation type="journal article" date="2003" name="J. Gen. Virol.">
        <title>Mechanisms and enzymes involved in SARS coronavirus genome expression.</title>
        <authorList>
            <person name="Thiel V."/>
            <person name="Ivanov K.A."/>
            <person name="Putics A."/>
            <person name="Hertzig T."/>
            <person name="Schelle B."/>
            <person name="Bayer S."/>
            <person name="Weissbrich B."/>
            <person name="Snijder E.J."/>
            <person name="Rabenau H."/>
            <person name="Doerr H.W."/>
            <person name="Gorbalenya A.E."/>
            <person name="Ziebuhr J."/>
        </authorList>
    </citation>
    <scope>NUCLEOTIDE SEQUENCE [GENOMIC RNA]</scope>
    <source>
        <strain>Isolate Frankfurt 1</strain>
    </source>
</reference>
<reference key="12">
    <citation type="journal article" date="2003" name="Chin. Med. J.">
        <title>Severe acute respiratory syndrome-associated coronavirus genotype and its characterization.</title>
        <authorList>
            <person name="Li L."/>
            <person name="Wang Z."/>
            <person name="Lu Y."/>
            <person name="Bao Q."/>
            <person name="Chen S."/>
            <person name="Wu N."/>
            <person name="Cheng S."/>
            <person name="Weng J."/>
            <person name="Zhang Y."/>
            <person name="Yan J."/>
            <person name="Mei L."/>
            <person name="Wang X."/>
            <person name="Zhu H."/>
            <person name="Yu Y."/>
            <person name="Zhang M."/>
            <person name="Li M."/>
            <person name="Yao J."/>
            <person name="Lu Q."/>
            <person name="Yao P."/>
            <person name="Bo X."/>
            <person name="Wo J."/>
            <person name="Wang S."/>
            <person name="Hu S."/>
        </authorList>
    </citation>
    <scope>NUCLEOTIDE SEQUENCE [GENOMIC RNA]</scope>
    <source>
        <strain>Isolate ZJ01</strain>
    </source>
</reference>
<reference key="13">
    <citation type="submission" date="2003-06" db="EMBL/GenBank/DDBJ databases">
        <title>SARS coronavirus ZJ01 isolate small envelope E protein.</title>
        <authorList>
            <person name="Cong L.-M."/>
            <person name="Ding G.-Q."/>
            <person name="Lu Y.-Y."/>
            <person name="Weng J.-Q."/>
            <person name="Yan J.-Y."/>
            <person name="Hu N.-P."/>
            <person name="Wo J.-E."/>
            <person name="Chen S.-Y."/>
            <person name="Zhang Y.-J."/>
            <person name="Mei L.-L."/>
            <person name="Wang Z.-G."/>
            <person name="Yao J."/>
            <person name="Zhu H.-P."/>
            <person name="Lu Q.-Y."/>
            <person name="Li M.-H."/>
            <person name="Gong L.-M."/>
            <person name="Shi W."/>
            <person name="Li L.-J."/>
        </authorList>
    </citation>
    <scope>NUCLEOTIDE SEQUENCE [MRNA]</scope>
    <source>
        <strain>Isolate ZJ01</strain>
    </source>
</reference>
<reference key="14">
    <citation type="submission" date="2003-06" db="EMBL/GenBank/DDBJ databases">
        <title>Genomic sequence of SARS isolate from the first fatal case in Taiwan.</title>
        <authorList>
            <person name="Yang J.-Y."/>
            <person name="Lin J.-H."/>
            <person name="Chiu S.-C."/>
            <person name="Wang S.-F."/>
            <person name="Lee S.C."/>
            <person name="Lin Y.-C."/>
            <person name="Hsu C.-K."/>
            <person name="Chen H.-Y."/>
            <person name="Chang J.G."/>
            <person name="Chen P.-J."/>
            <person name="Su I.-J."/>
        </authorList>
    </citation>
    <scope>NUCLEOTIDE SEQUENCE [GENOMIC RNA]</scope>
    <source>
        <strain>Isolate TWC</strain>
    </source>
</reference>
<reference key="15">
    <citation type="submission" date="2004-01" db="EMBL/GenBank/DDBJ databases">
        <title>Analysis of SARS coronavirus genome in Shanghai isolates.</title>
        <authorList>
            <person name="Yuan Z."/>
            <person name="Zhang X."/>
            <person name="Hu Y."/>
            <person name="Lan S."/>
            <person name="Wang H."/>
            <person name="Zhou Z."/>
            <person name="Wen Y."/>
        </authorList>
    </citation>
    <scope>NUCLEOTIDE SEQUENCE [GENOMIC RNA]</scope>
    <source>
        <strain>Isolate Shanghai QXC1</strain>
    </source>
</reference>
<reference key="16">
    <citation type="submission" date="2003-07" db="EMBL/GenBank/DDBJ databases">
        <authorList>
            <person name="Chang J.-G.C."/>
            <person name="Lin T.-H."/>
            <person name="Chen C.-M."/>
            <person name="Lin C.-S."/>
            <person name="Chan W.-L."/>
            <person name="Shih M.-C."/>
        </authorList>
    </citation>
    <scope>NUCLEOTIDE SEQUENCE [GENOMIC RNA]</scope>
    <source>
        <strain>Isolate Taiwan TC1</strain>
        <strain>Isolate Taiwan TC2</strain>
        <strain>Isolate Taiwan TC3</strain>
    </source>
</reference>
<reference key="17">
    <citation type="submission" date="2003-07" db="EMBL/GenBank/DDBJ databases">
        <title>The complete genome of SARS coronavirus TWH.</title>
        <authorList>
            <person name="Shu H.Y."/>
            <person name="Wu K.M."/>
            <person name="Tsai S.F."/>
        </authorList>
    </citation>
    <scope>NUCLEOTIDE SEQUENCE [GENOMIC RNA]</scope>
    <source>
        <strain>Isolate TWH</strain>
        <strain>Isolate TWJ</strain>
        <strain>Isolate TWK</strain>
        <strain>Isolate TWS</strain>
        <strain>Isolate TWY</strain>
    </source>
</reference>
<reference key="18">
    <citation type="submission" date="2003-07" db="EMBL/GenBank/DDBJ databases">
        <authorList>
            <person name="Canducci F."/>
            <person name="Clementi M."/>
            <person name="Poli G."/>
            <person name="Vicenzi E."/>
        </authorList>
    </citation>
    <scope>NUCLEOTIDE SEQUENCE [GENOMIC RNA]</scope>
    <source>
        <strain>Isolate HSR 1</strain>
    </source>
</reference>
<reference key="19">
    <citation type="submission" date="2003-08" db="EMBL/GenBank/DDBJ databases">
        <authorList>
            <person name="Yang J.-Y."/>
            <person name="Lin J.-H."/>
            <person name="Chiu S.-C."/>
            <person name="Wang S.-F."/>
            <person name="Lee H.-C."/>
            <person name="Lin Y.-C."/>
            <person name="Hsu C.-K."/>
            <person name="Chen H.-Y."/>
            <person name="Chen P.-J."/>
            <person name="Su I.-J."/>
        </authorList>
    </citation>
    <scope>NUCLEOTIDE SEQUENCE [GENOMIC RNA]</scope>
    <source>
        <strain>Isolate TWC2</strain>
        <strain>Isolate TWC3</strain>
    </source>
</reference>
<reference key="20">
    <citation type="submission" date="2003-10" db="EMBL/GenBank/DDBJ databases">
        <authorList>
            <person name="Balotta C."/>
            <person name="Corvasce S."/>
            <person name="Violin M."/>
            <person name="Galli M."/>
            <person name="Moroni M."/>
            <person name="Vigevani G.M."/>
            <person name="Ruan Y.J."/>
            <person name="Salemi M."/>
        </authorList>
    </citation>
    <scope>NUCLEOTIDE SEQUENCE [GENOMIC RNA]</scope>
    <source>
        <strain>Isolate AS</strain>
    </source>
</reference>
<reference key="21">
    <citation type="journal article" date="2004" name="J. Virol.">
        <title>A novel severe acute respiratory syndrome coronavirus protein, U274, is transported to the cell surface and undergoes endocytosis.</title>
        <authorList>
            <person name="Tan Y.-J."/>
            <person name="Teng E."/>
            <person name="Shen S."/>
            <person name="Tan T.H.P."/>
            <person name="Goh P.-Y."/>
            <person name="Fielding B.C."/>
            <person name="Ooi E.-E."/>
            <person name="Tan H.-C."/>
            <person name="Lim S.G."/>
            <person name="Hong W."/>
        </authorList>
    </citation>
    <scope>INTERACTION WITH ACCESSORY PROTEIN 3A</scope>
</reference>
<reference key="22">
    <citation type="journal article" date="2005" name="Virus Res.">
        <title>Subcellular localization and membrane association of SARS-CoV 3a protein.</title>
        <authorList>
            <person name="Yuan X."/>
            <person name="Li J."/>
            <person name="Shan Y."/>
            <person name="Yang Z."/>
            <person name="Zhao Z."/>
            <person name="Chen B."/>
            <person name="Yao Z."/>
            <person name="Dong B."/>
            <person name="Wang S."/>
            <person name="Chen J."/>
            <person name="Cong Y."/>
        </authorList>
    </citation>
    <scope>INTERACTION WITH ACCESSORY PROTEIN 3A</scope>
</reference>
<reference key="23">
    <citation type="journal article" date="2006" name="Biochem. Biophys. Res. Commun.">
        <title>Severe acute respiratory syndrome coronavirus protein 7a interacts with hSGT.</title>
        <authorList>
            <person name="Fielding B.C."/>
            <person name="Gunalan V."/>
            <person name="Tan T.H.P."/>
            <person name="Chou C.-F."/>
            <person name="Shen S."/>
            <person name="Khan S."/>
            <person name="Lim S.G."/>
            <person name="Hong W."/>
            <person name="Tan Y.-J."/>
        </authorList>
    </citation>
    <scope>INTERACTION WITH ACCESSORY PROTEIN 7A</scope>
</reference>
<reference key="24">
    <citation type="journal article" date="2009" name="Virus Genes">
        <title>Expression and membrane integration of SARS-CoV E protein and its interaction with M protein.</title>
        <authorList>
            <person name="Chen S.C."/>
            <person name="Lo S.Y."/>
            <person name="Ma H.C."/>
            <person name="Li H.C."/>
        </authorList>
    </citation>
    <scope>INTERACTION WITH PROTEIN M</scope>
</reference>
<reference key="25">
    <citation type="journal article" date="2010" name="Mol. Biol. Cell">
        <title>The SARS coronavirus E protein interacts with PALS1 and alters tight junction formation and epithelial morphogenesis.</title>
        <authorList>
            <person name="Teoh K.T."/>
            <person name="Siu Y.L."/>
            <person name="Chan W.L."/>
            <person name="Schlueter M.A."/>
            <person name="Liu C.J."/>
            <person name="Peiris J.S."/>
            <person name="Bruzzone R."/>
            <person name="Margolis B."/>
            <person name="Nal B."/>
        </authorList>
    </citation>
    <scope>INTERACTION WITH HUMAN PALS1</scope>
    <scope>SUBCELLULAR LOCATION</scope>
    <scope>MOTIF</scope>
    <scope>MUTAGENESIS OF 73-ASP--VAL-76</scope>
</reference>
<reference key="26">
    <citation type="journal article" date="2011" name="J. Virol.">
        <title>Identification of a Golgi complex-targeting signal in the cytoplasmic tail of the severe acute respiratory syndrome coronavirus envelope protein.</title>
        <authorList>
            <person name="Cohen J.R."/>
            <person name="Lin L.D."/>
            <person name="Machamer C.E."/>
        </authorList>
    </citation>
    <scope>SUBCELLULAR LOCATION</scope>
</reference>
<reference key="27">
    <citation type="journal article" date="2012" name="Protein Expr. Purif.">
        <title>Expression and purification of coronavirus envelope proteins using a modified beta-barrel construct.</title>
        <authorList>
            <person name="Parthasarathy K."/>
            <person name="Lu H."/>
            <person name="Surya W."/>
            <person name="Vararattanavech A."/>
            <person name="Pervushin K."/>
            <person name="Torres J."/>
        </authorList>
    </citation>
    <scope>SUBUNIT</scope>
</reference>
<reference key="28">
    <citation type="journal article" date="2014" name="PLoS Pathog.">
        <title>Severe acute respiratory syndrome coronavirus envelope protein ion channel activity promotes virus fitness and pathogenesis.</title>
        <authorList>
            <person name="Nieto-Torres J.L."/>
            <person name="DeDiego M.L."/>
            <person name="Verdia-Baguena C."/>
            <person name="Jimenez-Guardeno J.M."/>
            <person name="Regla-Nava J.A."/>
            <person name="Fernandez-Delgado R."/>
            <person name="Castano-Rodriguez C."/>
            <person name="Alcaraz A."/>
            <person name="Torres J."/>
            <person name="Aguilella V.M."/>
            <person name="Enjuanes L."/>
        </authorList>
    </citation>
    <scope>FUNCTION</scope>
    <scope>SUBCELLULAR LOCATION</scope>
</reference>
<reference key="29">
    <citation type="journal article" date="2014" name="J. Biomed. Sci.">
        <title>SARS-CoV envelope protein palmitoylation or nucleocapsid association is not required for promoting virus-like particle production.</title>
        <authorList>
            <person name="Tseng Y.T."/>
            <person name="Wang S.M."/>
            <person name="Huang K.J."/>
            <person name="Wang C.T."/>
        </authorList>
    </citation>
    <scope>INTERACTION WITH NUCLEOPROTEIN</scope>
</reference>
<reference key="30">
    <citation type="journal article" date="2015" name="Virology">
        <title>Severe acute respiratory syndrome coronavirus E protein transports calcium ions and activates the NLRP3 inflammasome.</title>
        <authorList>
            <person name="Nieto-Torres J.L."/>
            <person name="Verdia-Baguena C."/>
            <person name="Jimenez-Guardeno J.M."/>
            <person name="Regla-Nava J.A."/>
            <person name="Castano-Rodriguez C."/>
            <person name="Fernandez-Delgado R."/>
            <person name="Torres J."/>
            <person name="Aguilella V.M."/>
            <person name="Enjuanes L."/>
        </authorList>
    </citation>
    <scope>FUNCTION</scope>
</reference>
<proteinExistence type="evidence at protein level"/>